<protein>
    <recommendedName>
        <fullName evidence="1">Large ribosomal subunit protein uL3</fullName>
    </recommendedName>
    <alternativeName>
        <fullName evidence="3">50S ribosomal protein L3</fullName>
    </alternativeName>
</protein>
<evidence type="ECO:0000255" key="1">
    <source>
        <dbReference type="HAMAP-Rule" id="MF_01325"/>
    </source>
</evidence>
<evidence type="ECO:0000256" key="2">
    <source>
        <dbReference type="SAM" id="MobiDB-lite"/>
    </source>
</evidence>
<evidence type="ECO:0000305" key="3"/>
<accession>Q5HLZ9</accession>
<reference key="1">
    <citation type="journal article" date="2005" name="J. Bacteriol.">
        <title>Insights on evolution of virulence and resistance from the complete genome analysis of an early methicillin-resistant Staphylococcus aureus strain and a biofilm-producing methicillin-resistant Staphylococcus epidermidis strain.</title>
        <authorList>
            <person name="Gill S.R."/>
            <person name="Fouts D.E."/>
            <person name="Archer G.L."/>
            <person name="Mongodin E.F."/>
            <person name="DeBoy R.T."/>
            <person name="Ravel J."/>
            <person name="Paulsen I.T."/>
            <person name="Kolonay J.F."/>
            <person name="Brinkac L.M."/>
            <person name="Beanan M.J."/>
            <person name="Dodson R.J."/>
            <person name="Daugherty S.C."/>
            <person name="Madupu R."/>
            <person name="Angiuoli S.V."/>
            <person name="Durkin A.S."/>
            <person name="Haft D.H."/>
            <person name="Vamathevan J.J."/>
            <person name="Khouri H."/>
            <person name="Utterback T.R."/>
            <person name="Lee C."/>
            <person name="Dimitrov G."/>
            <person name="Jiang L."/>
            <person name="Qin H."/>
            <person name="Weidman J."/>
            <person name="Tran K."/>
            <person name="Kang K.H."/>
            <person name="Hance I.R."/>
            <person name="Nelson K.E."/>
            <person name="Fraser C.M."/>
        </authorList>
    </citation>
    <scope>NUCLEOTIDE SEQUENCE [LARGE SCALE GENOMIC DNA]</scope>
    <source>
        <strain>ATCC 35984 / DSM 28319 / BCRC 17069 / CCUG 31568 / BM 3577 / RP62A</strain>
    </source>
</reference>
<proteinExistence type="inferred from homology"/>
<comment type="function">
    <text evidence="1">One of the primary rRNA binding proteins, it binds directly near the 3'-end of the 23S rRNA, where it nucleates assembly of the 50S subunit.</text>
</comment>
<comment type="subunit">
    <text evidence="1">Part of the 50S ribosomal subunit. Forms a cluster with proteins L14 and L19.</text>
</comment>
<comment type="similarity">
    <text evidence="1">Belongs to the universal ribosomal protein uL3 family.</text>
</comment>
<feature type="chain" id="PRO_0000077160" description="Large ribosomal subunit protein uL3">
    <location>
        <begin position="1"/>
        <end position="220"/>
    </location>
</feature>
<feature type="region of interest" description="Disordered" evidence="2">
    <location>
        <begin position="61"/>
        <end position="81"/>
    </location>
</feature>
<dbReference type="EMBL" id="CP000029">
    <property type="protein sequence ID" value="AAW55169.1"/>
    <property type="molecule type" value="Genomic_DNA"/>
</dbReference>
<dbReference type="RefSeq" id="WP_010959260.1">
    <property type="nucleotide sequence ID" value="NC_002976.3"/>
</dbReference>
<dbReference type="SMR" id="Q5HLZ9"/>
<dbReference type="STRING" id="176279.SERP1831"/>
<dbReference type="KEGG" id="ser:SERP1831"/>
<dbReference type="eggNOG" id="COG0087">
    <property type="taxonomic scope" value="Bacteria"/>
</dbReference>
<dbReference type="HOGENOM" id="CLU_044142_4_1_9"/>
<dbReference type="Proteomes" id="UP000000531">
    <property type="component" value="Chromosome"/>
</dbReference>
<dbReference type="GO" id="GO:0022625">
    <property type="term" value="C:cytosolic large ribosomal subunit"/>
    <property type="evidence" value="ECO:0007669"/>
    <property type="project" value="TreeGrafter"/>
</dbReference>
<dbReference type="GO" id="GO:0019843">
    <property type="term" value="F:rRNA binding"/>
    <property type="evidence" value="ECO:0007669"/>
    <property type="project" value="UniProtKB-UniRule"/>
</dbReference>
<dbReference type="GO" id="GO:0003735">
    <property type="term" value="F:structural constituent of ribosome"/>
    <property type="evidence" value="ECO:0007669"/>
    <property type="project" value="InterPro"/>
</dbReference>
<dbReference type="GO" id="GO:0006412">
    <property type="term" value="P:translation"/>
    <property type="evidence" value="ECO:0007669"/>
    <property type="project" value="UniProtKB-UniRule"/>
</dbReference>
<dbReference type="FunFam" id="2.40.30.10:FF:000004">
    <property type="entry name" value="50S ribosomal protein L3"/>
    <property type="match status" value="1"/>
</dbReference>
<dbReference type="FunFam" id="3.30.160.810:FF:000002">
    <property type="entry name" value="50S ribosomal protein L3"/>
    <property type="match status" value="1"/>
</dbReference>
<dbReference type="Gene3D" id="3.30.160.810">
    <property type="match status" value="1"/>
</dbReference>
<dbReference type="Gene3D" id="2.40.30.10">
    <property type="entry name" value="Translation factors"/>
    <property type="match status" value="1"/>
</dbReference>
<dbReference type="HAMAP" id="MF_01325_B">
    <property type="entry name" value="Ribosomal_uL3_B"/>
    <property type="match status" value="1"/>
</dbReference>
<dbReference type="InterPro" id="IPR000597">
    <property type="entry name" value="Ribosomal_uL3"/>
</dbReference>
<dbReference type="InterPro" id="IPR019927">
    <property type="entry name" value="Ribosomal_uL3_bac/org-type"/>
</dbReference>
<dbReference type="InterPro" id="IPR019926">
    <property type="entry name" value="Ribosomal_uL3_CS"/>
</dbReference>
<dbReference type="InterPro" id="IPR009000">
    <property type="entry name" value="Transl_B-barrel_sf"/>
</dbReference>
<dbReference type="NCBIfam" id="TIGR03625">
    <property type="entry name" value="L3_bact"/>
    <property type="match status" value="1"/>
</dbReference>
<dbReference type="PANTHER" id="PTHR11229">
    <property type="entry name" value="50S RIBOSOMAL PROTEIN L3"/>
    <property type="match status" value="1"/>
</dbReference>
<dbReference type="PANTHER" id="PTHR11229:SF16">
    <property type="entry name" value="LARGE RIBOSOMAL SUBUNIT PROTEIN UL3C"/>
    <property type="match status" value="1"/>
</dbReference>
<dbReference type="Pfam" id="PF00297">
    <property type="entry name" value="Ribosomal_L3"/>
    <property type="match status" value="1"/>
</dbReference>
<dbReference type="SUPFAM" id="SSF50447">
    <property type="entry name" value="Translation proteins"/>
    <property type="match status" value="1"/>
</dbReference>
<dbReference type="PROSITE" id="PS00474">
    <property type="entry name" value="RIBOSOMAL_L3"/>
    <property type="match status" value="1"/>
</dbReference>
<name>RL3_STAEQ</name>
<keyword id="KW-1185">Reference proteome</keyword>
<keyword id="KW-0687">Ribonucleoprotein</keyword>
<keyword id="KW-0689">Ribosomal protein</keyword>
<keyword id="KW-0694">RNA-binding</keyword>
<keyword id="KW-0699">rRNA-binding</keyword>
<gene>
    <name evidence="1" type="primary">rplC</name>
    <name type="ordered locus">SERP1831</name>
</gene>
<sequence>MTKGILGRKIGMTQVFGENGELIPVTVVEASQNVVLQKKTEEVDGYNAIQVGFEDKQAYKKGSKSNKYANKPAEGHAKKADTAPKRFIREFRNLNVDEYEVGQEVSVDTFETGDIIDVTGVSKGKGFQGAIKRHGQGRGPMAHGSHFHRAPGSVGMASDASKVFKGQKMPGRMGGNTVTVQNLEVVQVDTENSVILVKGNVPGPKKGLVEITTSIKKGNK</sequence>
<organism>
    <name type="scientific">Staphylococcus epidermidis (strain ATCC 35984 / DSM 28319 / BCRC 17069 / CCUG 31568 / BM 3577 / RP62A)</name>
    <dbReference type="NCBI Taxonomy" id="176279"/>
    <lineage>
        <taxon>Bacteria</taxon>
        <taxon>Bacillati</taxon>
        <taxon>Bacillota</taxon>
        <taxon>Bacilli</taxon>
        <taxon>Bacillales</taxon>
        <taxon>Staphylococcaceae</taxon>
        <taxon>Staphylococcus</taxon>
    </lineage>
</organism>